<comment type="function">
    <text evidence="1">May be involved in vacuolar sorting and osmoregulation.</text>
</comment>
<comment type="cofactor">
    <cofactor evidence="2">
        <name>Zn(2+)</name>
        <dbReference type="ChEBI" id="CHEBI:29105"/>
    </cofactor>
    <text evidence="2">Binds 2 Zn(2+) ions per subunit.</text>
</comment>
<comment type="subcellular location">
    <subcellularLocation>
        <location evidence="1">Vacuole membrane</location>
        <topology evidence="3">Multi-pass membrane protein</topology>
    </subcellularLocation>
</comment>
<comment type="similarity">
    <text evidence="6">Belongs to the peptidase M28 family.</text>
</comment>
<keyword id="KW-0325">Glycoprotein</keyword>
<keyword id="KW-0378">Hydrolase</keyword>
<keyword id="KW-0472">Membrane</keyword>
<keyword id="KW-0479">Metal-binding</keyword>
<keyword id="KW-0482">Metalloprotease</keyword>
<keyword id="KW-0645">Protease</keyword>
<keyword id="KW-1185">Reference proteome</keyword>
<keyword id="KW-0812">Transmembrane</keyword>
<keyword id="KW-1133">Transmembrane helix</keyword>
<keyword id="KW-0926">Vacuole</keyword>
<keyword id="KW-0862">Zinc</keyword>
<organism>
    <name type="scientific">Pyricularia oryzae (strain 70-15 / ATCC MYA-4617 / FGSC 8958)</name>
    <name type="common">Rice blast fungus</name>
    <name type="synonym">Magnaporthe oryzae</name>
    <dbReference type="NCBI Taxonomy" id="242507"/>
    <lineage>
        <taxon>Eukaryota</taxon>
        <taxon>Fungi</taxon>
        <taxon>Dikarya</taxon>
        <taxon>Ascomycota</taxon>
        <taxon>Pezizomycotina</taxon>
        <taxon>Sordariomycetes</taxon>
        <taxon>Sordariomycetidae</taxon>
        <taxon>Magnaporthales</taxon>
        <taxon>Pyriculariaceae</taxon>
        <taxon>Pyricularia</taxon>
    </lineage>
</organism>
<reference key="1">
    <citation type="journal article" date="2005" name="Nature">
        <title>The genome sequence of the rice blast fungus Magnaporthe grisea.</title>
        <authorList>
            <person name="Dean R.A."/>
            <person name="Talbot N.J."/>
            <person name="Ebbole D.J."/>
            <person name="Farman M.L."/>
            <person name="Mitchell T.K."/>
            <person name="Orbach M.J."/>
            <person name="Thon M.R."/>
            <person name="Kulkarni R."/>
            <person name="Xu J.-R."/>
            <person name="Pan H."/>
            <person name="Read N.D."/>
            <person name="Lee Y.-H."/>
            <person name="Carbone I."/>
            <person name="Brown D."/>
            <person name="Oh Y.Y."/>
            <person name="Donofrio N."/>
            <person name="Jeong J.S."/>
            <person name="Soanes D.M."/>
            <person name="Djonovic S."/>
            <person name="Kolomiets E."/>
            <person name="Rehmeyer C."/>
            <person name="Li W."/>
            <person name="Harding M."/>
            <person name="Kim S."/>
            <person name="Lebrun M.-H."/>
            <person name="Bohnert H."/>
            <person name="Coughlan S."/>
            <person name="Butler J."/>
            <person name="Calvo S.E."/>
            <person name="Ma L.-J."/>
            <person name="Nicol R."/>
            <person name="Purcell S."/>
            <person name="Nusbaum C."/>
            <person name="Galagan J.E."/>
            <person name="Birren B.W."/>
        </authorList>
    </citation>
    <scope>NUCLEOTIDE SEQUENCE [LARGE SCALE GENOMIC DNA]</scope>
    <source>
        <strain>70-15 / ATCC MYA-4617 / FGSC 8958</strain>
    </source>
</reference>
<accession>A4R254</accession>
<accession>G4MLM1</accession>
<gene>
    <name type="ORF">MGG_06752</name>
</gene>
<name>PFF1_PYRO7</name>
<feature type="chain" id="PRO_0000411722" description="Vacuolar membrane protease">
    <location>
        <begin position="1"/>
        <end position="1011"/>
    </location>
</feature>
<feature type="topological domain" description="Cytoplasmic" evidence="1">
    <location>
        <begin position="1"/>
        <end position="9"/>
    </location>
</feature>
<feature type="transmembrane region" description="Helical; Name=1" evidence="3">
    <location>
        <begin position="10"/>
        <end position="30"/>
    </location>
</feature>
<feature type="topological domain" description="Vacuolar" evidence="1">
    <location>
        <begin position="31"/>
        <end position="378"/>
    </location>
</feature>
<feature type="transmembrane region" description="Helical; Name=2" evidence="3">
    <location>
        <begin position="379"/>
        <end position="399"/>
    </location>
</feature>
<feature type="topological domain" description="Cytoplasmic" evidence="1">
    <location>
        <begin position="400"/>
        <end position="439"/>
    </location>
</feature>
<feature type="transmembrane region" description="Helical; Name=3" evidence="3">
    <location>
        <begin position="440"/>
        <end position="460"/>
    </location>
</feature>
<feature type="topological domain" description="Vacuolar" evidence="1">
    <location>
        <begin position="461"/>
        <end position="471"/>
    </location>
</feature>
<feature type="transmembrane region" description="Helical; Name=4" evidence="3">
    <location>
        <begin position="472"/>
        <end position="492"/>
    </location>
</feature>
<feature type="topological domain" description="Cytoplasmic" evidence="1">
    <location>
        <begin position="493"/>
        <end position="505"/>
    </location>
</feature>
<feature type="transmembrane region" description="Helical; Name=5" evidence="3">
    <location>
        <begin position="506"/>
        <end position="526"/>
    </location>
</feature>
<feature type="topological domain" description="Vacuolar" evidence="1">
    <location>
        <begin position="527"/>
        <end position="536"/>
    </location>
</feature>
<feature type="transmembrane region" description="Helical; Name=6" evidence="3">
    <location>
        <begin position="537"/>
        <end position="557"/>
    </location>
</feature>
<feature type="topological domain" description="Cytoplasmic" evidence="1">
    <location>
        <begin position="558"/>
        <end position="682"/>
    </location>
</feature>
<feature type="transmembrane region" description="Helical; Name=7" evidence="3">
    <location>
        <begin position="683"/>
        <end position="703"/>
    </location>
</feature>
<feature type="topological domain" description="Vacuolar" evidence="1">
    <location>
        <begin position="704"/>
        <end position="719"/>
    </location>
</feature>
<feature type="transmembrane region" description="Helical; Name=8" evidence="3">
    <location>
        <begin position="720"/>
        <end position="740"/>
    </location>
</feature>
<feature type="topological domain" description="Cytoplasmic" evidence="1">
    <location>
        <begin position="741"/>
        <end position="747"/>
    </location>
</feature>
<feature type="transmembrane region" description="Helical; Name=9" evidence="3">
    <location>
        <begin position="748"/>
        <end position="768"/>
    </location>
</feature>
<feature type="topological domain" description="Vacuolar" evidence="1">
    <location>
        <begin position="769"/>
        <end position="1011"/>
    </location>
</feature>
<feature type="region of interest" description="Disordered" evidence="5">
    <location>
        <begin position="595"/>
        <end position="627"/>
    </location>
</feature>
<feature type="region of interest" description="Disordered" evidence="5">
    <location>
        <begin position="650"/>
        <end position="671"/>
    </location>
</feature>
<feature type="compositionally biased region" description="Polar residues" evidence="5">
    <location>
        <begin position="595"/>
        <end position="609"/>
    </location>
</feature>
<feature type="compositionally biased region" description="Acidic residues" evidence="5">
    <location>
        <begin position="610"/>
        <end position="622"/>
    </location>
</feature>
<feature type="active site" description="Proton acceptor" evidence="2">
    <location>
        <position position="205"/>
    </location>
</feature>
<feature type="binding site" evidence="2">
    <location>
        <position position="159"/>
    </location>
    <ligand>
        <name>Zn(2+)</name>
        <dbReference type="ChEBI" id="CHEBI:29105"/>
        <label>1</label>
        <note>catalytic</note>
    </ligand>
</feature>
<feature type="binding site" evidence="2">
    <location>
        <position position="171"/>
    </location>
    <ligand>
        <name>Zn(2+)</name>
        <dbReference type="ChEBI" id="CHEBI:29105"/>
        <label>1</label>
        <note>catalytic</note>
    </ligand>
</feature>
<feature type="binding site" evidence="2">
    <location>
        <position position="171"/>
    </location>
    <ligand>
        <name>Zn(2+)</name>
        <dbReference type="ChEBI" id="CHEBI:29105"/>
        <label>2</label>
        <note>catalytic</note>
    </ligand>
</feature>
<feature type="binding site" evidence="2">
    <location>
        <position position="206"/>
    </location>
    <ligand>
        <name>Zn(2+)</name>
        <dbReference type="ChEBI" id="CHEBI:29105"/>
        <label>2</label>
        <note>catalytic</note>
    </ligand>
</feature>
<feature type="binding site" evidence="2">
    <location>
        <position position="231"/>
    </location>
    <ligand>
        <name>Zn(2+)</name>
        <dbReference type="ChEBI" id="CHEBI:29105"/>
        <label>1</label>
        <note>catalytic</note>
    </ligand>
</feature>
<feature type="binding site" evidence="2">
    <location>
        <position position="304"/>
    </location>
    <ligand>
        <name>Zn(2+)</name>
        <dbReference type="ChEBI" id="CHEBI:29105"/>
        <label>2</label>
        <note>catalytic</note>
    </ligand>
</feature>
<feature type="site" description="Transition state stabilizer" evidence="2">
    <location>
        <position position="303"/>
    </location>
</feature>
<feature type="glycosylation site" description="N-linked (GlcNAc...) asparagine" evidence="4">
    <location>
        <position position="50"/>
    </location>
</feature>
<feature type="glycosylation site" description="N-linked (GlcNAc...) asparagine" evidence="4">
    <location>
        <position position="106"/>
    </location>
</feature>
<feature type="glycosylation site" description="N-linked (GlcNAc...) asparagine" evidence="4">
    <location>
        <position position="331"/>
    </location>
</feature>
<feature type="glycosylation site" description="N-linked (GlcNAc...) asparagine" evidence="4">
    <location>
        <position position="709"/>
    </location>
</feature>
<feature type="glycosylation site" description="N-linked (GlcNAc...) asparagine" evidence="4">
    <location>
        <position position="872"/>
    </location>
</feature>
<dbReference type="EC" id="3.4.-.-" evidence="6"/>
<dbReference type="EMBL" id="CM001231">
    <property type="protein sequence ID" value="EHA56854.1"/>
    <property type="molecule type" value="Genomic_DNA"/>
</dbReference>
<dbReference type="RefSeq" id="XP_003709466.1">
    <property type="nucleotide sequence ID" value="XM_003709418.1"/>
</dbReference>
<dbReference type="SMR" id="A4R254"/>
<dbReference type="FunCoup" id="A4R254">
    <property type="interactions" value="4"/>
</dbReference>
<dbReference type="STRING" id="242507.A4R254"/>
<dbReference type="GeneID" id="2684925"/>
<dbReference type="KEGG" id="mgr:MGG_06752"/>
<dbReference type="VEuPathDB" id="FungiDB:MGG_06752"/>
<dbReference type="eggNOG" id="KOG2194">
    <property type="taxonomic scope" value="Eukaryota"/>
</dbReference>
<dbReference type="HOGENOM" id="CLU_006412_1_0_1"/>
<dbReference type="InParanoid" id="A4R254"/>
<dbReference type="OMA" id="FCHTFVN"/>
<dbReference type="OrthoDB" id="76293at2759"/>
<dbReference type="Proteomes" id="UP000009058">
    <property type="component" value="Chromosome 1"/>
</dbReference>
<dbReference type="GO" id="GO:0005774">
    <property type="term" value="C:vacuolar membrane"/>
    <property type="evidence" value="ECO:0007669"/>
    <property type="project" value="UniProtKB-SubCell"/>
</dbReference>
<dbReference type="GO" id="GO:0046872">
    <property type="term" value="F:metal ion binding"/>
    <property type="evidence" value="ECO:0007669"/>
    <property type="project" value="UniProtKB-KW"/>
</dbReference>
<dbReference type="GO" id="GO:0008235">
    <property type="term" value="F:metalloexopeptidase activity"/>
    <property type="evidence" value="ECO:0007669"/>
    <property type="project" value="InterPro"/>
</dbReference>
<dbReference type="GO" id="GO:0006508">
    <property type="term" value="P:proteolysis"/>
    <property type="evidence" value="ECO:0007669"/>
    <property type="project" value="UniProtKB-KW"/>
</dbReference>
<dbReference type="CDD" id="cd03875">
    <property type="entry name" value="M28_Fxna_like"/>
    <property type="match status" value="1"/>
</dbReference>
<dbReference type="FunFam" id="3.40.630.10:FF:000057">
    <property type="entry name" value="Vacuolar membrane protease"/>
    <property type="match status" value="1"/>
</dbReference>
<dbReference type="Gene3D" id="3.40.630.10">
    <property type="entry name" value="Zn peptidases"/>
    <property type="match status" value="1"/>
</dbReference>
<dbReference type="InterPro" id="IPR048024">
    <property type="entry name" value="Fxna-like_M28_dom"/>
</dbReference>
<dbReference type="InterPro" id="IPR045175">
    <property type="entry name" value="M28_fam"/>
</dbReference>
<dbReference type="InterPro" id="IPR007484">
    <property type="entry name" value="Peptidase_M28"/>
</dbReference>
<dbReference type="InterPro" id="IPR053975">
    <property type="entry name" value="PFF1_C"/>
</dbReference>
<dbReference type="InterPro" id="IPR053976">
    <property type="entry name" value="PFF1_TM"/>
</dbReference>
<dbReference type="PANTHER" id="PTHR12147">
    <property type="entry name" value="METALLOPEPTIDASE M28 FAMILY MEMBER"/>
    <property type="match status" value="1"/>
</dbReference>
<dbReference type="PANTHER" id="PTHR12147:SF58">
    <property type="entry name" value="VACUOLAR MEMBRANE PROTEASE"/>
    <property type="match status" value="1"/>
</dbReference>
<dbReference type="Pfam" id="PF04389">
    <property type="entry name" value="Peptidase_M28"/>
    <property type="match status" value="1"/>
</dbReference>
<dbReference type="Pfam" id="PF22250">
    <property type="entry name" value="PFF1_C"/>
    <property type="match status" value="1"/>
</dbReference>
<dbReference type="Pfam" id="PF22251">
    <property type="entry name" value="PFF1_TM"/>
    <property type="match status" value="1"/>
</dbReference>
<dbReference type="SUPFAM" id="SSF53187">
    <property type="entry name" value="Zn-dependent exopeptidases"/>
    <property type="match status" value="1"/>
</dbReference>
<sequence length="1011" mass="111327">MSNPFAFRSAQVTFWTTVVYLALLVPLVVINEGVPPVQPDGSLFLDRGLNLTEAWLDLGHITERFHHQNSRENDVVRDYLRLRIEQIIAANDAEARTTVFNDLTSNVTYLAWGSAVPTHYQGNNLYVYIRGKDDDQGEWWHNARAGKLIGKGGVLVNAHFDSVSTAYGATDDGMGTVTVLQMIRYFTKPGNQPQRGIVALLNNAEEPGLLGAAAFGKSPLLPFIHTFLNLEGAGAGSRCVLFRSTDREVTSAFSNVQSPFGSVVGSDGFKMGLVRSGTDYSVWHDIYGQRGLDLAFYRPRALYHTNQDDTKHTSRESLWQMMAASTTTLINLSADTGSDYIGDRPDGDRSKAPNGSPSDGVWFDLFGSTFVLFGLRGMFAWSLTVLIVGPLTLFGMMYLVHKQGKGYAFHTKLRATSDSSSEDGDDEDGEVIRLGGWKGFFRFPFALIVAGALVTGAALLLRKMNPFIIYSSEYAVWAMMISLFYFGFWLIMRGSSYTRPSALHRLYVHIWLFILGWVALVFATVLEDRMRIASGYIFVFWESQVFLATLVAVCELFSLPRKIDFARGAAEEAEVRDHLEAVPHSDAVIAPSLEEATSPQRAGQSSNSPQEDDEDDVPDEETPLFRKAGRGNKLDTSFLRRGYRRSVSAIMDSNNEAEDGPKRKQPFEGEQAWSGPMVTSTWILQFLLLGPFMVILGGQVGLLLTSAVNQTGVDGSSLLAPYLMIAALSAILLMPLSPFIHRVTKHVPLFLLAVAFATLIYSLVAFPFSPRAPYKTFFRQTVDLDTGDTQVHLAGVEQYLRKIIADVPSALGQEIACDASSSRRDLVDCTYDAAQVPPIPTYGSGKKSFDLPPGVSPGPAYYGKLLTVTVVNTTAKIATQGSKTARLKIDAVDTRVVELRFSKEGPPIRSFRVVGADSWDDRFGAFPDDGARVLRLWRRDWESSFVVDITWKVDGGNTRGLEGRAVALWSDANDAVNTMPAFREVVRYAPAWATVSKAAPGLVEGSKAFKV</sequence>
<proteinExistence type="inferred from homology"/>
<evidence type="ECO:0000250" key="1">
    <source>
        <dbReference type="UniProtKB" id="P38244"/>
    </source>
</evidence>
<evidence type="ECO:0000250" key="2">
    <source>
        <dbReference type="UniProtKB" id="P80561"/>
    </source>
</evidence>
<evidence type="ECO:0000255" key="3"/>
<evidence type="ECO:0000255" key="4">
    <source>
        <dbReference type="PROSITE-ProRule" id="PRU00498"/>
    </source>
</evidence>
<evidence type="ECO:0000256" key="5">
    <source>
        <dbReference type="SAM" id="MobiDB-lite"/>
    </source>
</evidence>
<evidence type="ECO:0000305" key="6"/>
<protein>
    <recommendedName>
        <fullName evidence="1">Vacuolar membrane protease</fullName>
        <ecNumber evidence="6">3.4.-.-</ecNumber>
    </recommendedName>
    <alternativeName>
        <fullName evidence="1">FXNA-related family protease 1</fullName>
    </alternativeName>
</protein>